<protein>
    <recommendedName>
        <fullName evidence="1">Large ribosomal subunit protein uL14</fullName>
    </recommendedName>
    <alternativeName>
        <fullName evidence="2">50S ribosomal protein L14</fullName>
    </alternativeName>
</protein>
<gene>
    <name evidence="1" type="primary">rplN</name>
    <name type="ordered locus">Chy400_2566</name>
</gene>
<name>RL14_CHLSY</name>
<proteinExistence type="inferred from homology"/>
<sequence>MIQPQTRLKVADNTGAKEIMCIRVLGGSRVRYGRVGDIIVASVKVATPGGQVKKGDVVKAVIIRTAKEYGRPDGSHIRFDDNAAVLIGKENNPRGTRIFGPVARELREKQFMRIVSLAPEVL</sequence>
<comment type="function">
    <text evidence="1">Binds to 23S rRNA. Forms part of two intersubunit bridges in the 70S ribosome.</text>
</comment>
<comment type="subunit">
    <text evidence="1">Part of the 50S ribosomal subunit. Forms a cluster with proteins L3 and L19. In the 70S ribosome, L14 and L19 interact and together make contacts with the 16S rRNA in bridges B5 and B8.</text>
</comment>
<comment type="similarity">
    <text evidence="1">Belongs to the universal ribosomal protein uL14 family.</text>
</comment>
<accession>B9LJE2</accession>
<keyword id="KW-0687">Ribonucleoprotein</keyword>
<keyword id="KW-0689">Ribosomal protein</keyword>
<keyword id="KW-0694">RNA-binding</keyword>
<keyword id="KW-0699">rRNA-binding</keyword>
<dbReference type="EMBL" id="CP001364">
    <property type="protein sequence ID" value="ACM53958.1"/>
    <property type="molecule type" value="Genomic_DNA"/>
</dbReference>
<dbReference type="SMR" id="B9LJE2"/>
<dbReference type="KEGG" id="chl:Chy400_2566"/>
<dbReference type="HOGENOM" id="CLU_095071_2_1_0"/>
<dbReference type="OrthoDB" id="9806379at2"/>
<dbReference type="GO" id="GO:0022625">
    <property type="term" value="C:cytosolic large ribosomal subunit"/>
    <property type="evidence" value="ECO:0007669"/>
    <property type="project" value="TreeGrafter"/>
</dbReference>
<dbReference type="GO" id="GO:0070180">
    <property type="term" value="F:large ribosomal subunit rRNA binding"/>
    <property type="evidence" value="ECO:0007669"/>
    <property type="project" value="TreeGrafter"/>
</dbReference>
<dbReference type="GO" id="GO:0003735">
    <property type="term" value="F:structural constituent of ribosome"/>
    <property type="evidence" value="ECO:0007669"/>
    <property type="project" value="InterPro"/>
</dbReference>
<dbReference type="GO" id="GO:0006412">
    <property type="term" value="P:translation"/>
    <property type="evidence" value="ECO:0007669"/>
    <property type="project" value="UniProtKB-UniRule"/>
</dbReference>
<dbReference type="CDD" id="cd00337">
    <property type="entry name" value="Ribosomal_uL14"/>
    <property type="match status" value="1"/>
</dbReference>
<dbReference type="FunFam" id="2.40.150.20:FF:000001">
    <property type="entry name" value="50S ribosomal protein L14"/>
    <property type="match status" value="1"/>
</dbReference>
<dbReference type="Gene3D" id="2.40.150.20">
    <property type="entry name" value="Ribosomal protein L14"/>
    <property type="match status" value="1"/>
</dbReference>
<dbReference type="HAMAP" id="MF_01367">
    <property type="entry name" value="Ribosomal_uL14"/>
    <property type="match status" value="1"/>
</dbReference>
<dbReference type="InterPro" id="IPR000218">
    <property type="entry name" value="Ribosomal_uL14"/>
</dbReference>
<dbReference type="InterPro" id="IPR005745">
    <property type="entry name" value="Ribosomal_uL14_bac-type"/>
</dbReference>
<dbReference type="InterPro" id="IPR019972">
    <property type="entry name" value="Ribosomal_uL14_CS"/>
</dbReference>
<dbReference type="InterPro" id="IPR036853">
    <property type="entry name" value="Ribosomal_uL14_sf"/>
</dbReference>
<dbReference type="NCBIfam" id="TIGR01067">
    <property type="entry name" value="rplN_bact"/>
    <property type="match status" value="1"/>
</dbReference>
<dbReference type="PANTHER" id="PTHR11761">
    <property type="entry name" value="50S/60S RIBOSOMAL PROTEIN L14/L23"/>
    <property type="match status" value="1"/>
</dbReference>
<dbReference type="PANTHER" id="PTHR11761:SF3">
    <property type="entry name" value="LARGE RIBOSOMAL SUBUNIT PROTEIN UL14M"/>
    <property type="match status" value="1"/>
</dbReference>
<dbReference type="Pfam" id="PF00238">
    <property type="entry name" value="Ribosomal_L14"/>
    <property type="match status" value="1"/>
</dbReference>
<dbReference type="SMART" id="SM01374">
    <property type="entry name" value="Ribosomal_L14"/>
    <property type="match status" value="1"/>
</dbReference>
<dbReference type="SUPFAM" id="SSF50193">
    <property type="entry name" value="Ribosomal protein L14"/>
    <property type="match status" value="1"/>
</dbReference>
<dbReference type="PROSITE" id="PS00049">
    <property type="entry name" value="RIBOSOMAL_L14"/>
    <property type="match status" value="1"/>
</dbReference>
<evidence type="ECO:0000255" key="1">
    <source>
        <dbReference type="HAMAP-Rule" id="MF_01367"/>
    </source>
</evidence>
<evidence type="ECO:0000305" key="2"/>
<organism>
    <name type="scientific">Chloroflexus aurantiacus (strain ATCC 29364 / DSM 637 / Y-400-fl)</name>
    <dbReference type="NCBI Taxonomy" id="480224"/>
    <lineage>
        <taxon>Bacteria</taxon>
        <taxon>Bacillati</taxon>
        <taxon>Chloroflexota</taxon>
        <taxon>Chloroflexia</taxon>
        <taxon>Chloroflexales</taxon>
        <taxon>Chloroflexineae</taxon>
        <taxon>Chloroflexaceae</taxon>
        <taxon>Chloroflexus</taxon>
    </lineage>
</organism>
<feature type="chain" id="PRO_1000166910" description="Large ribosomal subunit protein uL14">
    <location>
        <begin position="1"/>
        <end position="122"/>
    </location>
</feature>
<reference key="1">
    <citation type="submission" date="2009-01" db="EMBL/GenBank/DDBJ databases">
        <title>Complete sequence of Chloroflexus sp. Y-400-fl.</title>
        <authorList>
            <consortium name="US DOE Joint Genome Institute"/>
            <person name="Lucas S."/>
            <person name="Copeland A."/>
            <person name="Lapidus A."/>
            <person name="Glavina del Rio T."/>
            <person name="Dalin E."/>
            <person name="Tice H."/>
            <person name="Bruce D."/>
            <person name="Goodwin L."/>
            <person name="Pitluck S."/>
            <person name="Sims D."/>
            <person name="Kiss H."/>
            <person name="Brettin T."/>
            <person name="Detter J.C."/>
            <person name="Han C."/>
            <person name="Larimer F."/>
            <person name="Land M."/>
            <person name="Hauser L."/>
            <person name="Kyrpides N."/>
            <person name="Ovchinnikova G."/>
            <person name="Bryant D.A."/>
            <person name="Richardson P."/>
        </authorList>
    </citation>
    <scope>NUCLEOTIDE SEQUENCE [LARGE SCALE GENOMIC DNA]</scope>
    <source>
        <strain>ATCC 29364 / DSM 637 / Y-400-fl</strain>
    </source>
</reference>